<protein>
    <recommendedName>
        <fullName evidence="1">2-isopropylmalate synthase</fullName>
        <ecNumber evidence="1">2.3.3.13</ecNumber>
    </recommendedName>
    <alternativeName>
        <fullName evidence="1">Alpha-IPM synthase</fullName>
    </alternativeName>
    <alternativeName>
        <fullName evidence="1">Alpha-isopropylmalate synthase</fullName>
    </alternativeName>
</protein>
<comment type="function">
    <text evidence="1">Catalyzes the condensation of the acetyl group of acetyl-CoA with 3-methyl-2-oxobutanoate (2-ketoisovalerate) to form 3-carboxy-3-hydroxy-4-methylpentanoate (2-isopropylmalate).</text>
</comment>
<comment type="catalytic activity">
    <reaction evidence="1">
        <text>3-methyl-2-oxobutanoate + acetyl-CoA + H2O = (2S)-2-isopropylmalate + CoA + H(+)</text>
        <dbReference type="Rhea" id="RHEA:21524"/>
        <dbReference type="ChEBI" id="CHEBI:1178"/>
        <dbReference type="ChEBI" id="CHEBI:11851"/>
        <dbReference type="ChEBI" id="CHEBI:15377"/>
        <dbReference type="ChEBI" id="CHEBI:15378"/>
        <dbReference type="ChEBI" id="CHEBI:57287"/>
        <dbReference type="ChEBI" id="CHEBI:57288"/>
        <dbReference type="EC" id="2.3.3.13"/>
    </reaction>
</comment>
<comment type="cofactor">
    <cofactor evidence="1">
        <name>Mn(2+)</name>
        <dbReference type="ChEBI" id="CHEBI:29035"/>
    </cofactor>
</comment>
<comment type="pathway">
    <text evidence="1">Amino-acid biosynthesis; L-leucine biosynthesis; L-leucine from 3-methyl-2-oxobutanoate: step 1/4.</text>
</comment>
<comment type="subunit">
    <text evidence="1">Homodimer.</text>
</comment>
<comment type="subcellular location">
    <subcellularLocation>
        <location evidence="1">Cytoplasm</location>
    </subcellularLocation>
</comment>
<comment type="similarity">
    <text evidence="1">Belongs to the alpha-IPM synthase/homocitrate synthase family. LeuA type 1 subfamily.</text>
</comment>
<feature type="chain" id="PRO_1000149154" description="2-isopropylmalate synthase">
    <location>
        <begin position="1"/>
        <end position="516"/>
    </location>
</feature>
<feature type="domain" description="Pyruvate carboxyltransferase" evidence="1">
    <location>
        <begin position="5"/>
        <end position="268"/>
    </location>
</feature>
<feature type="region of interest" description="Regulatory domain" evidence="1">
    <location>
        <begin position="395"/>
        <end position="516"/>
    </location>
</feature>
<feature type="binding site" evidence="1">
    <location>
        <position position="14"/>
    </location>
    <ligand>
        <name>Mn(2+)</name>
        <dbReference type="ChEBI" id="CHEBI:29035"/>
    </ligand>
</feature>
<feature type="binding site" evidence="1">
    <location>
        <position position="202"/>
    </location>
    <ligand>
        <name>Mn(2+)</name>
        <dbReference type="ChEBI" id="CHEBI:29035"/>
    </ligand>
</feature>
<feature type="binding site" evidence="1">
    <location>
        <position position="204"/>
    </location>
    <ligand>
        <name>Mn(2+)</name>
        <dbReference type="ChEBI" id="CHEBI:29035"/>
    </ligand>
</feature>
<feature type="binding site" evidence="1">
    <location>
        <position position="239"/>
    </location>
    <ligand>
        <name>Mn(2+)</name>
        <dbReference type="ChEBI" id="CHEBI:29035"/>
    </ligand>
</feature>
<accession>B2JDN6</accession>
<gene>
    <name evidence="1" type="primary">leuA</name>
    <name type="ordered locus">Bphy_2017</name>
</gene>
<keyword id="KW-0028">Amino-acid biosynthesis</keyword>
<keyword id="KW-0100">Branched-chain amino acid biosynthesis</keyword>
<keyword id="KW-0963">Cytoplasm</keyword>
<keyword id="KW-0432">Leucine biosynthesis</keyword>
<keyword id="KW-0464">Manganese</keyword>
<keyword id="KW-0479">Metal-binding</keyword>
<keyword id="KW-1185">Reference proteome</keyword>
<keyword id="KW-0808">Transferase</keyword>
<organism>
    <name type="scientific">Paraburkholderia phymatum (strain DSM 17167 / CIP 108236 / LMG 21445 / STM815)</name>
    <name type="common">Burkholderia phymatum</name>
    <dbReference type="NCBI Taxonomy" id="391038"/>
    <lineage>
        <taxon>Bacteria</taxon>
        <taxon>Pseudomonadati</taxon>
        <taxon>Pseudomonadota</taxon>
        <taxon>Betaproteobacteria</taxon>
        <taxon>Burkholderiales</taxon>
        <taxon>Burkholderiaceae</taxon>
        <taxon>Paraburkholderia</taxon>
    </lineage>
</organism>
<reference key="1">
    <citation type="journal article" date="2014" name="Stand. Genomic Sci.">
        <title>Complete genome sequence of Burkholderia phymatum STM815(T), a broad host range and efficient nitrogen-fixing symbiont of Mimosa species.</title>
        <authorList>
            <person name="Moulin L."/>
            <person name="Klonowska A."/>
            <person name="Caroline B."/>
            <person name="Booth K."/>
            <person name="Vriezen J.A."/>
            <person name="Melkonian R."/>
            <person name="James E.K."/>
            <person name="Young J.P."/>
            <person name="Bena G."/>
            <person name="Hauser L."/>
            <person name="Land M."/>
            <person name="Kyrpides N."/>
            <person name="Bruce D."/>
            <person name="Chain P."/>
            <person name="Copeland A."/>
            <person name="Pitluck S."/>
            <person name="Woyke T."/>
            <person name="Lizotte-Waniewski M."/>
            <person name="Bristow J."/>
            <person name="Riley M."/>
        </authorList>
    </citation>
    <scope>NUCLEOTIDE SEQUENCE [LARGE SCALE GENOMIC DNA]</scope>
    <source>
        <strain>DSM 17167 / CIP 108236 / LMG 21445 / STM815</strain>
    </source>
</reference>
<evidence type="ECO:0000255" key="1">
    <source>
        <dbReference type="HAMAP-Rule" id="MF_01025"/>
    </source>
</evidence>
<dbReference type="EC" id="2.3.3.13" evidence="1"/>
<dbReference type="EMBL" id="CP001043">
    <property type="protein sequence ID" value="ACC71196.1"/>
    <property type="molecule type" value="Genomic_DNA"/>
</dbReference>
<dbReference type="RefSeq" id="WP_012401404.1">
    <property type="nucleotide sequence ID" value="NC_010622.1"/>
</dbReference>
<dbReference type="SMR" id="B2JDN6"/>
<dbReference type="STRING" id="391038.Bphy_2017"/>
<dbReference type="KEGG" id="bph:Bphy_2017"/>
<dbReference type="eggNOG" id="COG0119">
    <property type="taxonomic scope" value="Bacteria"/>
</dbReference>
<dbReference type="HOGENOM" id="CLU_022158_0_1_4"/>
<dbReference type="OrthoDB" id="9803573at2"/>
<dbReference type="UniPathway" id="UPA00048">
    <property type="reaction ID" value="UER00070"/>
</dbReference>
<dbReference type="Proteomes" id="UP000001192">
    <property type="component" value="Chromosome 1"/>
</dbReference>
<dbReference type="GO" id="GO:0005829">
    <property type="term" value="C:cytosol"/>
    <property type="evidence" value="ECO:0007669"/>
    <property type="project" value="TreeGrafter"/>
</dbReference>
<dbReference type="GO" id="GO:0003852">
    <property type="term" value="F:2-isopropylmalate synthase activity"/>
    <property type="evidence" value="ECO:0007669"/>
    <property type="project" value="UniProtKB-UniRule"/>
</dbReference>
<dbReference type="GO" id="GO:0003985">
    <property type="term" value="F:acetyl-CoA C-acetyltransferase activity"/>
    <property type="evidence" value="ECO:0007669"/>
    <property type="project" value="UniProtKB-UniRule"/>
</dbReference>
<dbReference type="GO" id="GO:0030145">
    <property type="term" value="F:manganese ion binding"/>
    <property type="evidence" value="ECO:0007669"/>
    <property type="project" value="UniProtKB-UniRule"/>
</dbReference>
<dbReference type="GO" id="GO:0009098">
    <property type="term" value="P:L-leucine biosynthetic process"/>
    <property type="evidence" value="ECO:0007669"/>
    <property type="project" value="UniProtKB-UniRule"/>
</dbReference>
<dbReference type="CDD" id="cd07940">
    <property type="entry name" value="DRE_TIM_IPMS"/>
    <property type="match status" value="1"/>
</dbReference>
<dbReference type="FunFam" id="1.10.238.260:FF:000001">
    <property type="entry name" value="2-isopropylmalate synthase"/>
    <property type="match status" value="1"/>
</dbReference>
<dbReference type="FunFam" id="3.20.20.70:FF:000010">
    <property type="entry name" value="2-isopropylmalate synthase"/>
    <property type="match status" value="1"/>
</dbReference>
<dbReference type="FunFam" id="3.30.160.270:FF:000003">
    <property type="entry name" value="2-isopropylmalate synthase"/>
    <property type="match status" value="1"/>
</dbReference>
<dbReference type="Gene3D" id="1.10.238.260">
    <property type="match status" value="1"/>
</dbReference>
<dbReference type="Gene3D" id="3.30.160.270">
    <property type="match status" value="1"/>
</dbReference>
<dbReference type="Gene3D" id="3.20.20.70">
    <property type="entry name" value="Aldolase class I"/>
    <property type="match status" value="1"/>
</dbReference>
<dbReference type="HAMAP" id="MF_01025">
    <property type="entry name" value="LeuA_type1"/>
    <property type="match status" value="1"/>
</dbReference>
<dbReference type="InterPro" id="IPR050073">
    <property type="entry name" value="2-IPM_HCS-like"/>
</dbReference>
<dbReference type="InterPro" id="IPR013709">
    <property type="entry name" value="2-isopropylmalate_synth_dimer"/>
</dbReference>
<dbReference type="InterPro" id="IPR002034">
    <property type="entry name" value="AIPM/Hcit_synth_CS"/>
</dbReference>
<dbReference type="InterPro" id="IPR013785">
    <property type="entry name" value="Aldolase_TIM"/>
</dbReference>
<dbReference type="InterPro" id="IPR054691">
    <property type="entry name" value="LeuA/HCS_post-cat"/>
</dbReference>
<dbReference type="InterPro" id="IPR036230">
    <property type="entry name" value="LeuA_allosteric_dom_sf"/>
</dbReference>
<dbReference type="InterPro" id="IPR005671">
    <property type="entry name" value="LeuA_bact_synth"/>
</dbReference>
<dbReference type="InterPro" id="IPR000891">
    <property type="entry name" value="PYR_CT"/>
</dbReference>
<dbReference type="NCBIfam" id="TIGR00973">
    <property type="entry name" value="leuA_bact"/>
    <property type="match status" value="1"/>
</dbReference>
<dbReference type="NCBIfam" id="NF002086">
    <property type="entry name" value="PRK00915.1-3"/>
    <property type="match status" value="1"/>
</dbReference>
<dbReference type="NCBIfam" id="NF002087">
    <property type="entry name" value="PRK00915.1-4"/>
    <property type="match status" value="1"/>
</dbReference>
<dbReference type="PANTHER" id="PTHR10277:SF9">
    <property type="entry name" value="2-ISOPROPYLMALATE SYNTHASE 1, CHLOROPLASTIC-RELATED"/>
    <property type="match status" value="1"/>
</dbReference>
<dbReference type="PANTHER" id="PTHR10277">
    <property type="entry name" value="HOMOCITRATE SYNTHASE-RELATED"/>
    <property type="match status" value="1"/>
</dbReference>
<dbReference type="Pfam" id="PF22617">
    <property type="entry name" value="HCS_D2"/>
    <property type="match status" value="1"/>
</dbReference>
<dbReference type="Pfam" id="PF00682">
    <property type="entry name" value="HMGL-like"/>
    <property type="match status" value="1"/>
</dbReference>
<dbReference type="Pfam" id="PF08502">
    <property type="entry name" value="LeuA_dimer"/>
    <property type="match status" value="1"/>
</dbReference>
<dbReference type="SMART" id="SM00917">
    <property type="entry name" value="LeuA_dimer"/>
    <property type="match status" value="1"/>
</dbReference>
<dbReference type="SUPFAM" id="SSF110921">
    <property type="entry name" value="2-isopropylmalate synthase LeuA, allosteric (dimerisation) domain"/>
    <property type="match status" value="1"/>
</dbReference>
<dbReference type="SUPFAM" id="SSF51569">
    <property type="entry name" value="Aldolase"/>
    <property type="match status" value="1"/>
</dbReference>
<dbReference type="PROSITE" id="PS00815">
    <property type="entry name" value="AIPM_HOMOCIT_SYNTH_1"/>
    <property type="match status" value="1"/>
</dbReference>
<dbReference type="PROSITE" id="PS00816">
    <property type="entry name" value="AIPM_HOMOCIT_SYNTH_2"/>
    <property type="match status" value="1"/>
</dbReference>
<dbReference type="PROSITE" id="PS50991">
    <property type="entry name" value="PYR_CT"/>
    <property type="match status" value="1"/>
</dbReference>
<sequence>MADKLIIFDTTLRDGEQSPGASMTKEEKIRIAKQLERMKVDVIEAGFAASSNGDFDAIHTIAGMIKDSTICSLARANDKDIQRAADALKPADHFRIHTFIATSPLHMEKKLRMSPEQVLEQAKLAVRFARKFTNDVEFSPEDGSRSDMDFLCRVLEAVIAEGATTINIADTVGYGVPELYGNLVKTLRERIPNSDKAVFSVHCHNDLGMAVANSLAGVKIGGARQVECTINGLGERAGNTSLEEIVMAVRTRKDYFGLDLGIDTTQIVPASKLVSQITGFVVQPNKAVVGANAFAHASGIHQDGVLKARDTYEIMRAEDVGWTANKIVLGKLSGRNAFKQRLQELGISLDSESELNLAFQRFKELADRKAEIFDEDIIAIVTEESAEAQEKEHYKFVSLSQHSETGERPHARIVFSVEGKEVVGEANGNGPVDATLNAIETEVGSGSELLLYSVNAITTGTQAQGEVTVRLSKAGRIVNGVGTDPDIVAASAKAYISALNRLYAGADKLNPQRADI</sequence>
<name>LEU1_PARP8</name>
<proteinExistence type="inferred from homology"/>